<organism>
    <name type="scientific">Rickettsia prowazekii (strain Madrid E)</name>
    <dbReference type="NCBI Taxonomy" id="272947"/>
    <lineage>
        <taxon>Bacteria</taxon>
        <taxon>Pseudomonadati</taxon>
        <taxon>Pseudomonadota</taxon>
        <taxon>Alphaproteobacteria</taxon>
        <taxon>Rickettsiales</taxon>
        <taxon>Rickettsiaceae</taxon>
        <taxon>Rickettsieae</taxon>
        <taxon>Rickettsia</taxon>
        <taxon>typhus group</taxon>
    </lineage>
</organism>
<comment type="similarity">
    <text evidence="1">Belongs to the UPF0301 (AlgH) family.</text>
</comment>
<protein>
    <recommendedName>
        <fullName evidence="1">UPF0301 protein RP032</fullName>
    </recommendedName>
</protein>
<proteinExistence type="inferred from homology"/>
<sequence>MCDKIFHNLSGKTLVATPYVITKGIYHKSLIYMLSHTEEGAIGLIFNRLVNHVDLKSFFKIKEDKITSQVMVPIYLGGPIEHEKGFFLHSRDYNKNLLLDFHNDLAVSSNLEISEDIAFGKGPKNSLFIVGYTAWKPGQLEEELEKNLWLVMDCSKEFIFAENPENKWHNALKHLGIDEIYFSSQIGNA</sequence>
<feature type="chain" id="PRO_0000214343" description="UPF0301 protein RP032">
    <location>
        <begin position="1"/>
        <end position="189"/>
    </location>
</feature>
<gene>
    <name type="ordered locus">RP032</name>
</gene>
<evidence type="ECO:0000255" key="1">
    <source>
        <dbReference type="HAMAP-Rule" id="MF_00758"/>
    </source>
</evidence>
<keyword id="KW-1185">Reference proteome</keyword>
<dbReference type="EMBL" id="AJ235270">
    <property type="protein sequence ID" value="CAA14503.1"/>
    <property type="molecule type" value="Genomic_DNA"/>
</dbReference>
<dbReference type="PIR" id="H71710">
    <property type="entry name" value="H71710"/>
</dbReference>
<dbReference type="RefSeq" id="NP_220426.1">
    <property type="nucleotide sequence ID" value="NC_000963.1"/>
</dbReference>
<dbReference type="RefSeq" id="WP_004599709.1">
    <property type="nucleotide sequence ID" value="NC_000963.1"/>
</dbReference>
<dbReference type="SMR" id="Q9ZEB3"/>
<dbReference type="STRING" id="272947.gene:17555115"/>
<dbReference type="EnsemblBacteria" id="CAA14503">
    <property type="protein sequence ID" value="CAA14503"/>
    <property type="gene ID" value="CAA14503"/>
</dbReference>
<dbReference type="KEGG" id="rpr:RP032"/>
<dbReference type="PATRIC" id="fig|272947.5.peg.33"/>
<dbReference type="eggNOG" id="COG1678">
    <property type="taxonomic scope" value="Bacteria"/>
</dbReference>
<dbReference type="HOGENOM" id="CLU_057596_1_0_5"/>
<dbReference type="OrthoDB" id="9807486at2"/>
<dbReference type="Proteomes" id="UP000002480">
    <property type="component" value="Chromosome"/>
</dbReference>
<dbReference type="GO" id="GO:0005829">
    <property type="term" value="C:cytosol"/>
    <property type="evidence" value="ECO:0007669"/>
    <property type="project" value="TreeGrafter"/>
</dbReference>
<dbReference type="Gene3D" id="3.40.1740.10">
    <property type="entry name" value="VC0467-like"/>
    <property type="match status" value="1"/>
</dbReference>
<dbReference type="HAMAP" id="MF_00758">
    <property type="entry name" value="UPF0301"/>
    <property type="match status" value="1"/>
</dbReference>
<dbReference type="InterPro" id="IPR003774">
    <property type="entry name" value="AlgH-like"/>
</dbReference>
<dbReference type="NCBIfam" id="NF001268">
    <property type="entry name" value="PRK00228.1-4"/>
    <property type="match status" value="1"/>
</dbReference>
<dbReference type="PANTHER" id="PTHR30327">
    <property type="entry name" value="UNCHARACTERIZED PROTEIN YQGE"/>
    <property type="match status" value="1"/>
</dbReference>
<dbReference type="PANTHER" id="PTHR30327:SF1">
    <property type="entry name" value="UPF0301 PROTEIN YQGE"/>
    <property type="match status" value="1"/>
</dbReference>
<dbReference type="Pfam" id="PF02622">
    <property type="entry name" value="DUF179"/>
    <property type="match status" value="1"/>
</dbReference>
<dbReference type="SUPFAM" id="SSF143456">
    <property type="entry name" value="VC0467-like"/>
    <property type="match status" value="1"/>
</dbReference>
<name>Y032_RICPR</name>
<reference key="1">
    <citation type="journal article" date="1998" name="Nature">
        <title>The genome sequence of Rickettsia prowazekii and the origin of mitochondria.</title>
        <authorList>
            <person name="Andersson S.G.E."/>
            <person name="Zomorodipour A."/>
            <person name="Andersson J.O."/>
            <person name="Sicheritz-Ponten T."/>
            <person name="Alsmark U.C.M."/>
            <person name="Podowski R.M."/>
            <person name="Naeslund A.K."/>
            <person name="Eriksson A.-S."/>
            <person name="Winkler H.H."/>
            <person name="Kurland C.G."/>
        </authorList>
    </citation>
    <scope>NUCLEOTIDE SEQUENCE [LARGE SCALE GENOMIC DNA]</scope>
    <source>
        <strain>Madrid E</strain>
    </source>
</reference>
<accession>Q9ZEB3</accession>